<organism>
    <name type="scientific">Mycobacterium bovis (strain ATCC BAA-935 / AF2122/97)</name>
    <dbReference type="NCBI Taxonomy" id="233413"/>
    <lineage>
        <taxon>Bacteria</taxon>
        <taxon>Bacillati</taxon>
        <taxon>Actinomycetota</taxon>
        <taxon>Actinomycetes</taxon>
        <taxon>Mycobacteriales</taxon>
        <taxon>Mycobacteriaceae</taxon>
        <taxon>Mycobacterium</taxon>
        <taxon>Mycobacterium tuberculosis complex</taxon>
    </lineage>
</organism>
<gene>
    <name type="primary">tsaE</name>
    <name type="ordered locus">BQ2027_MB3456C</name>
</gene>
<reference key="1">
    <citation type="journal article" date="2003" name="Proc. Natl. Acad. Sci. U.S.A.">
        <title>The complete genome sequence of Mycobacterium bovis.</title>
        <authorList>
            <person name="Garnier T."/>
            <person name="Eiglmeier K."/>
            <person name="Camus J.-C."/>
            <person name="Medina N."/>
            <person name="Mansoor H."/>
            <person name="Pryor M."/>
            <person name="Duthoy S."/>
            <person name="Grondin S."/>
            <person name="Lacroix C."/>
            <person name="Monsempe C."/>
            <person name="Simon S."/>
            <person name="Harris B."/>
            <person name="Atkin R."/>
            <person name="Doggett J."/>
            <person name="Mayes R."/>
            <person name="Keating L."/>
            <person name="Wheeler P.R."/>
            <person name="Parkhill J."/>
            <person name="Barrell B.G."/>
            <person name="Cole S.T."/>
            <person name="Gordon S.V."/>
            <person name="Hewinson R.G."/>
        </authorList>
    </citation>
    <scope>NUCLEOTIDE SEQUENCE [LARGE SCALE GENOMIC DNA]</scope>
    <source>
        <strain>ATCC BAA-935 / AF2122/97</strain>
    </source>
</reference>
<reference key="2">
    <citation type="journal article" date="2017" name="Genome Announc.">
        <title>Updated reference genome sequence and annotation of Mycobacterium bovis AF2122/97.</title>
        <authorList>
            <person name="Malone K.M."/>
            <person name="Farrell D."/>
            <person name="Stuber T.P."/>
            <person name="Schubert O.T."/>
            <person name="Aebersold R."/>
            <person name="Robbe-Austerman S."/>
            <person name="Gordon S.V."/>
        </authorList>
    </citation>
    <scope>NUCLEOTIDE SEQUENCE [LARGE SCALE GENOMIC DNA]</scope>
    <scope>GENOME REANNOTATION</scope>
    <source>
        <strain>ATCC BAA-935 / AF2122/97</strain>
    </source>
</reference>
<accession>P67172</accession>
<accession>A0A1R3Y462</accession>
<accession>Q50706</accession>
<accession>X2BN80</accession>
<evidence type="ECO:0000250" key="1"/>
<evidence type="ECO:0000256" key="2">
    <source>
        <dbReference type="SAM" id="MobiDB-lite"/>
    </source>
</evidence>
<evidence type="ECO:0000305" key="3"/>
<sequence length="168" mass="18214">MSREGIRRRPKARAGLTGGGTATLPRVEDTLTLGSRLGEQLCAGDVVVLSGPLGAGKTVLAKGIAMAMDVEGPITSPTFVLARMHRPRRPGTPAMVHVDVYRLLDHNSADLLSELDSLDLDTDLEDAVVVVEWGEGLAERLSQRHLDVRLERVSHSDTRIATWSWGRS</sequence>
<feature type="chain" id="PRO_0000096215" description="tRNA threonylcarbamoyladenosine biosynthesis protein TsaE">
    <location>
        <begin position="1"/>
        <end position="168"/>
    </location>
</feature>
<feature type="region of interest" description="Disordered" evidence="2">
    <location>
        <begin position="1"/>
        <end position="21"/>
    </location>
</feature>
<feature type="binding site" evidence="1">
    <location>
        <begin position="54"/>
        <end position="59"/>
    </location>
    <ligand>
        <name>ATP</name>
        <dbReference type="ChEBI" id="CHEBI:30616"/>
    </ligand>
</feature>
<feature type="binding site" evidence="1">
    <location>
        <position position="58"/>
    </location>
    <ligand>
        <name>Mg(2+)</name>
        <dbReference type="ChEBI" id="CHEBI:18420"/>
    </ligand>
</feature>
<feature type="binding site" evidence="1">
    <location>
        <position position="132"/>
    </location>
    <ligand>
        <name>Mg(2+)</name>
        <dbReference type="ChEBI" id="CHEBI:18420"/>
    </ligand>
</feature>
<name>TSAE_MYCBO</name>
<comment type="function">
    <text evidence="1">Required for the formation of a threonylcarbamoyl group on adenosine at position 37 (t(6)A37) in tRNAs that read codons beginning with adenine. Is involved in the transfer of the threonylcarbamoyl moiety of threonylcarbamoyl-AMP (TC-AMP) to the N6 group of A37, together with TsaD and TsaB. TsaE seems to play an indirect role in the t(6)A biosynthesis pathway, possibly in regulating the core enzymatic function of TsaD (By similarity).</text>
</comment>
<comment type="subcellular location">
    <subcellularLocation>
        <location evidence="1">Cytoplasm</location>
    </subcellularLocation>
</comment>
<comment type="similarity">
    <text evidence="3">Belongs to the TsaE family.</text>
</comment>
<protein>
    <recommendedName>
        <fullName>tRNA threonylcarbamoyladenosine biosynthesis protein TsaE</fullName>
    </recommendedName>
    <alternativeName>
        <fullName>t(6)A37 threonylcarbamoyladenosine biosynthesis protein TsaE</fullName>
    </alternativeName>
</protein>
<proteinExistence type="inferred from homology"/>
<dbReference type="EMBL" id="LT708304">
    <property type="protein sequence ID" value="SIU02084.1"/>
    <property type="molecule type" value="Genomic_DNA"/>
</dbReference>
<dbReference type="RefSeq" id="NP_857096.1">
    <property type="nucleotide sequence ID" value="NC_002945.3"/>
</dbReference>
<dbReference type="RefSeq" id="WP_003418042.1">
    <property type="nucleotide sequence ID" value="NC_002945.4"/>
</dbReference>
<dbReference type="SMR" id="P67172"/>
<dbReference type="KEGG" id="mbo:BQ2027_MB3456C"/>
<dbReference type="PATRIC" id="fig|233413.5.peg.3791"/>
<dbReference type="Proteomes" id="UP000001419">
    <property type="component" value="Chromosome"/>
</dbReference>
<dbReference type="GO" id="GO:0005737">
    <property type="term" value="C:cytoplasm"/>
    <property type="evidence" value="ECO:0007669"/>
    <property type="project" value="UniProtKB-SubCell"/>
</dbReference>
<dbReference type="GO" id="GO:0005524">
    <property type="term" value="F:ATP binding"/>
    <property type="evidence" value="ECO:0007669"/>
    <property type="project" value="UniProtKB-KW"/>
</dbReference>
<dbReference type="GO" id="GO:0046872">
    <property type="term" value="F:metal ion binding"/>
    <property type="evidence" value="ECO:0007669"/>
    <property type="project" value="UniProtKB-KW"/>
</dbReference>
<dbReference type="GO" id="GO:0002949">
    <property type="term" value="P:tRNA threonylcarbamoyladenosine modification"/>
    <property type="evidence" value="ECO:0007669"/>
    <property type="project" value="InterPro"/>
</dbReference>
<dbReference type="FunFam" id="3.40.50.300:FF:001732">
    <property type="entry name" value="tRNA threonylcarbamoyladenosine biosynthesis protein TsaE"/>
    <property type="match status" value="1"/>
</dbReference>
<dbReference type="Gene3D" id="3.40.50.300">
    <property type="entry name" value="P-loop containing nucleotide triphosphate hydrolases"/>
    <property type="match status" value="1"/>
</dbReference>
<dbReference type="InterPro" id="IPR027417">
    <property type="entry name" value="P-loop_NTPase"/>
</dbReference>
<dbReference type="InterPro" id="IPR003442">
    <property type="entry name" value="T6A_TsaE"/>
</dbReference>
<dbReference type="NCBIfam" id="TIGR00150">
    <property type="entry name" value="T6A_YjeE"/>
    <property type="match status" value="1"/>
</dbReference>
<dbReference type="PANTHER" id="PTHR33540">
    <property type="entry name" value="TRNA THREONYLCARBAMOYLADENOSINE BIOSYNTHESIS PROTEIN TSAE"/>
    <property type="match status" value="1"/>
</dbReference>
<dbReference type="PANTHER" id="PTHR33540:SF2">
    <property type="entry name" value="TRNA THREONYLCARBAMOYLADENOSINE BIOSYNTHESIS PROTEIN TSAE"/>
    <property type="match status" value="1"/>
</dbReference>
<dbReference type="Pfam" id="PF02367">
    <property type="entry name" value="TsaE"/>
    <property type="match status" value="1"/>
</dbReference>
<dbReference type="SUPFAM" id="SSF52540">
    <property type="entry name" value="P-loop containing nucleoside triphosphate hydrolases"/>
    <property type="match status" value="1"/>
</dbReference>
<keyword id="KW-0067">ATP-binding</keyword>
<keyword id="KW-0963">Cytoplasm</keyword>
<keyword id="KW-0460">Magnesium</keyword>
<keyword id="KW-0479">Metal-binding</keyword>
<keyword id="KW-0547">Nucleotide-binding</keyword>
<keyword id="KW-1185">Reference proteome</keyword>
<keyword id="KW-0819">tRNA processing</keyword>